<proteinExistence type="inferred from homology"/>
<name>CLPS_ECO7I</name>
<organism>
    <name type="scientific">Escherichia coli O7:K1 (strain IAI39 / ExPEC)</name>
    <dbReference type="NCBI Taxonomy" id="585057"/>
    <lineage>
        <taxon>Bacteria</taxon>
        <taxon>Pseudomonadati</taxon>
        <taxon>Pseudomonadota</taxon>
        <taxon>Gammaproteobacteria</taxon>
        <taxon>Enterobacterales</taxon>
        <taxon>Enterobacteriaceae</taxon>
        <taxon>Escherichia</taxon>
    </lineage>
</organism>
<accession>B7NM96</accession>
<protein>
    <recommendedName>
        <fullName evidence="1">ATP-dependent Clp protease adapter protein ClpS</fullName>
    </recommendedName>
</protein>
<sequence>MGKTNDWLDFDQLAEEKVRDALKPPSMYKVILVNDDYTPMEFVIDVLQKFFSYDVERATQLMLAVHYQGKAICGVFTAEVAETKVAMVNKYARENEHPLLCTLEKA</sequence>
<evidence type="ECO:0000255" key="1">
    <source>
        <dbReference type="HAMAP-Rule" id="MF_00302"/>
    </source>
</evidence>
<gene>
    <name evidence="1" type="primary">clpS</name>
    <name type="ordered locus">ECIAI39_2270</name>
</gene>
<comment type="function">
    <text evidence="1">Involved in the modulation of the specificity of the ClpAP-mediated ATP-dependent protein degradation.</text>
</comment>
<comment type="subunit">
    <text evidence="1">Binds to the N-terminal domain of the chaperone ClpA.</text>
</comment>
<comment type="similarity">
    <text evidence="1">Belongs to the ClpS family.</text>
</comment>
<dbReference type="EMBL" id="CU928164">
    <property type="protein sequence ID" value="CAR18396.1"/>
    <property type="molecule type" value="Genomic_DNA"/>
</dbReference>
<dbReference type="RefSeq" id="WP_000520781.1">
    <property type="nucleotide sequence ID" value="NC_011750.1"/>
</dbReference>
<dbReference type="RefSeq" id="YP_002408232.1">
    <property type="nucleotide sequence ID" value="NC_011750.1"/>
</dbReference>
<dbReference type="SMR" id="B7NM96"/>
<dbReference type="STRING" id="585057.ECIAI39_2270"/>
<dbReference type="GeneID" id="86863397"/>
<dbReference type="KEGG" id="ect:ECIAI39_2270"/>
<dbReference type="PATRIC" id="fig|585057.6.peg.2363"/>
<dbReference type="HOGENOM" id="CLU_134358_2_1_6"/>
<dbReference type="Proteomes" id="UP000000749">
    <property type="component" value="Chromosome"/>
</dbReference>
<dbReference type="GO" id="GO:0030163">
    <property type="term" value="P:protein catabolic process"/>
    <property type="evidence" value="ECO:0007669"/>
    <property type="project" value="InterPro"/>
</dbReference>
<dbReference type="GO" id="GO:0006508">
    <property type="term" value="P:proteolysis"/>
    <property type="evidence" value="ECO:0007669"/>
    <property type="project" value="UniProtKB-UniRule"/>
</dbReference>
<dbReference type="FunFam" id="3.30.1390.10:FF:000002">
    <property type="entry name" value="ATP-dependent Clp protease adapter protein ClpS"/>
    <property type="match status" value="1"/>
</dbReference>
<dbReference type="Gene3D" id="3.30.1390.10">
    <property type="match status" value="1"/>
</dbReference>
<dbReference type="HAMAP" id="MF_00302">
    <property type="entry name" value="ClpS"/>
    <property type="match status" value="1"/>
</dbReference>
<dbReference type="InterPro" id="IPR022935">
    <property type="entry name" value="ClpS"/>
</dbReference>
<dbReference type="InterPro" id="IPR003769">
    <property type="entry name" value="ClpS_core"/>
</dbReference>
<dbReference type="InterPro" id="IPR014719">
    <property type="entry name" value="Ribosomal_bL12_C/ClpS-like"/>
</dbReference>
<dbReference type="NCBIfam" id="NF000670">
    <property type="entry name" value="PRK00033.1-3"/>
    <property type="match status" value="1"/>
</dbReference>
<dbReference type="NCBIfam" id="NF000672">
    <property type="entry name" value="PRK00033.1-5"/>
    <property type="match status" value="1"/>
</dbReference>
<dbReference type="PANTHER" id="PTHR33473:SF19">
    <property type="entry name" value="ATP-DEPENDENT CLP PROTEASE ADAPTER PROTEIN CLPS"/>
    <property type="match status" value="1"/>
</dbReference>
<dbReference type="PANTHER" id="PTHR33473">
    <property type="entry name" value="ATP-DEPENDENT CLP PROTEASE ADAPTER PROTEIN CLPS1, CHLOROPLASTIC"/>
    <property type="match status" value="1"/>
</dbReference>
<dbReference type="Pfam" id="PF02617">
    <property type="entry name" value="ClpS"/>
    <property type="match status" value="1"/>
</dbReference>
<dbReference type="SUPFAM" id="SSF54736">
    <property type="entry name" value="ClpS-like"/>
    <property type="match status" value="1"/>
</dbReference>
<feature type="chain" id="PRO_1000119499" description="ATP-dependent Clp protease adapter protein ClpS">
    <location>
        <begin position="1"/>
        <end position="106"/>
    </location>
</feature>
<reference key="1">
    <citation type="journal article" date="2009" name="PLoS Genet.">
        <title>Organised genome dynamics in the Escherichia coli species results in highly diverse adaptive paths.</title>
        <authorList>
            <person name="Touchon M."/>
            <person name="Hoede C."/>
            <person name="Tenaillon O."/>
            <person name="Barbe V."/>
            <person name="Baeriswyl S."/>
            <person name="Bidet P."/>
            <person name="Bingen E."/>
            <person name="Bonacorsi S."/>
            <person name="Bouchier C."/>
            <person name="Bouvet O."/>
            <person name="Calteau A."/>
            <person name="Chiapello H."/>
            <person name="Clermont O."/>
            <person name="Cruveiller S."/>
            <person name="Danchin A."/>
            <person name="Diard M."/>
            <person name="Dossat C."/>
            <person name="Karoui M.E."/>
            <person name="Frapy E."/>
            <person name="Garry L."/>
            <person name="Ghigo J.M."/>
            <person name="Gilles A.M."/>
            <person name="Johnson J."/>
            <person name="Le Bouguenec C."/>
            <person name="Lescat M."/>
            <person name="Mangenot S."/>
            <person name="Martinez-Jehanne V."/>
            <person name="Matic I."/>
            <person name="Nassif X."/>
            <person name="Oztas S."/>
            <person name="Petit M.A."/>
            <person name="Pichon C."/>
            <person name="Rouy Z."/>
            <person name="Ruf C.S."/>
            <person name="Schneider D."/>
            <person name="Tourret J."/>
            <person name="Vacherie B."/>
            <person name="Vallenet D."/>
            <person name="Medigue C."/>
            <person name="Rocha E.P.C."/>
            <person name="Denamur E."/>
        </authorList>
    </citation>
    <scope>NUCLEOTIDE SEQUENCE [LARGE SCALE GENOMIC DNA]</scope>
    <source>
        <strain>IAI39 / ExPEC</strain>
    </source>
</reference>